<accession>Q54UF7</accession>
<evidence type="ECO:0000250" key="1">
    <source>
        <dbReference type="UniProtKB" id="P26297"/>
    </source>
</evidence>
<evidence type="ECO:0000250" key="2">
    <source>
        <dbReference type="UniProtKB" id="P30901"/>
    </source>
</evidence>
<evidence type="ECO:0000305" key="3"/>
<evidence type="ECO:0007829" key="4">
    <source>
        <dbReference type="PDB" id="7WN9"/>
    </source>
</evidence>
<dbReference type="EC" id="1.1.1.28"/>
<dbReference type="EMBL" id="AAFI02000040">
    <property type="protein sequence ID" value="EAL66847.1"/>
    <property type="molecule type" value="Genomic_DNA"/>
</dbReference>
<dbReference type="RefSeq" id="XP_640819.1">
    <property type="nucleotide sequence ID" value="XM_635727.1"/>
</dbReference>
<dbReference type="PDB" id="7WN9">
    <property type="method" value="X-ray"/>
    <property type="resolution" value="2.30 A"/>
    <property type="chains" value="A/B=1-340"/>
</dbReference>
<dbReference type="PDB" id="8GRV">
    <property type="method" value="X-ray"/>
    <property type="resolution" value="2.90 A"/>
    <property type="chains" value="A=1-340"/>
</dbReference>
<dbReference type="PDBsum" id="7WN9"/>
<dbReference type="PDBsum" id="8GRV"/>
<dbReference type="SMR" id="Q54UF7"/>
<dbReference type="FunCoup" id="Q54UF7">
    <property type="interactions" value="64"/>
</dbReference>
<dbReference type="STRING" id="44689.Q54UF7"/>
<dbReference type="PaxDb" id="44689-DDB0238140"/>
<dbReference type="EnsemblProtists" id="EAL66847">
    <property type="protein sequence ID" value="EAL66847"/>
    <property type="gene ID" value="DDB_G0281101"/>
</dbReference>
<dbReference type="GeneID" id="8622873"/>
<dbReference type="KEGG" id="ddi:DDB_G0281101"/>
<dbReference type="dictyBase" id="DDB_G0281101">
    <property type="gene designation" value="ldhA"/>
</dbReference>
<dbReference type="VEuPathDB" id="AmoebaDB:DDB_G0281101"/>
<dbReference type="eggNOG" id="KOG0068">
    <property type="taxonomic scope" value="Eukaryota"/>
</dbReference>
<dbReference type="HOGENOM" id="CLU_019796_1_1_1"/>
<dbReference type="InParanoid" id="Q54UF7"/>
<dbReference type="OMA" id="VIVTAHQ"/>
<dbReference type="PhylomeDB" id="Q54UF7"/>
<dbReference type="PRO" id="PR:Q54UF7"/>
<dbReference type="Proteomes" id="UP000002195">
    <property type="component" value="Chromosome 3"/>
</dbReference>
<dbReference type="GO" id="GO:0045335">
    <property type="term" value="C:phagocytic vesicle"/>
    <property type="evidence" value="ECO:0007005"/>
    <property type="project" value="dictyBase"/>
</dbReference>
<dbReference type="GO" id="GO:0008720">
    <property type="term" value="F:D-lactate dehydrogenase activity"/>
    <property type="evidence" value="ECO:0000250"/>
    <property type="project" value="dictyBase"/>
</dbReference>
<dbReference type="GO" id="GO:0051287">
    <property type="term" value="F:NAD binding"/>
    <property type="evidence" value="ECO:0007669"/>
    <property type="project" value="InterPro"/>
</dbReference>
<dbReference type="CDD" id="cd12183">
    <property type="entry name" value="LDH_like_2"/>
    <property type="match status" value="1"/>
</dbReference>
<dbReference type="FunFam" id="3.40.50.720:FF:000292">
    <property type="entry name" value="Putative D-lactate dehydrogenase"/>
    <property type="match status" value="1"/>
</dbReference>
<dbReference type="Gene3D" id="3.40.50.720">
    <property type="entry name" value="NAD(P)-binding Rossmann-like Domain"/>
    <property type="match status" value="2"/>
</dbReference>
<dbReference type="InterPro" id="IPR006139">
    <property type="entry name" value="D-isomer_2_OHA_DH_cat_dom"/>
</dbReference>
<dbReference type="InterPro" id="IPR029753">
    <property type="entry name" value="D-isomer_DH_CS"/>
</dbReference>
<dbReference type="InterPro" id="IPR006140">
    <property type="entry name" value="D-isomer_DH_NAD-bd"/>
</dbReference>
<dbReference type="InterPro" id="IPR036291">
    <property type="entry name" value="NAD(P)-bd_dom_sf"/>
</dbReference>
<dbReference type="PANTHER" id="PTHR43026">
    <property type="entry name" value="2-HYDROXYACID DEHYDROGENASE HOMOLOG 1-RELATED"/>
    <property type="match status" value="1"/>
</dbReference>
<dbReference type="PANTHER" id="PTHR43026:SF1">
    <property type="entry name" value="2-HYDROXYACID DEHYDROGENASE HOMOLOG 1-RELATED"/>
    <property type="match status" value="1"/>
</dbReference>
<dbReference type="Pfam" id="PF00389">
    <property type="entry name" value="2-Hacid_dh"/>
    <property type="match status" value="1"/>
</dbReference>
<dbReference type="Pfam" id="PF02826">
    <property type="entry name" value="2-Hacid_dh_C"/>
    <property type="match status" value="1"/>
</dbReference>
<dbReference type="SUPFAM" id="SSF52283">
    <property type="entry name" value="Formate/glycerate dehydrogenase catalytic domain-like"/>
    <property type="match status" value="1"/>
</dbReference>
<dbReference type="SUPFAM" id="SSF51735">
    <property type="entry name" value="NAD(P)-binding Rossmann-fold domains"/>
    <property type="match status" value="1"/>
</dbReference>
<dbReference type="PROSITE" id="PS00670">
    <property type="entry name" value="D_2_HYDROXYACID_DH_2"/>
    <property type="match status" value="1"/>
</dbReference>
<dbReference type="PROSITE" id="PS00671">
    <property type="entry name" value="D_2_HYDROXYACID_DH_3"/>
    <property type="match status" value="1"/>
</dbReference>
<name>LDHD_DICDI</name>
<protein>
    <recommendedName>
        <fullName>Putative D-lactate dehydrogenase</fullName>
        <shortName>D-LDH</shortName>
        <ecNumber>1.1.1.28</ecNumber>
    </recommendedName>
</protein>
<feature type="chain" id="PRO_0000312345" description="Putative D-lactate dehydrogenase">
    <location>
        <begin position="1"/>
        <end position="340"/>
    </location>
</feature>
<feature type="active site" evidence="1">
    <location>
        <position position="235"/>
    </location>
</feature>
<feature type="active site" evidence="1">
    <location>
        <position position="264"/>
    </location>
</feature>
<feature type="active site" description="Proton donor" evidence="1">
    <location>
        <position position="296"/>
    </location>
</feature>
<feature type="binding site" evidence="2">
    <location>
        <begin position="153"/>
        <end position="154"/>
    </location>
    <ligand>
        <name>NAD(+)</name>
        <dbReference type="ChEBI" id="CHEBI:57540"/>
    </ligand>
</feature>
<feature type="binding site" evidence="1">
    <location>
        <position position="174"/>
    </location>
    <ligand>
        <name>NAD(+)</name>
        <dbReference type="ChEBI" id="CHEBI:57540"/>
    </ligand>
</feature>
<feature type="binding site" evidence="2">
    <location>
        <begin position="206"/>
        <end position="207"/>
    </location>
    <ligand>
        <name>NAD(+)</name>
        <dbReference type="ChEBI" id="CHEBI:57540"/>
    </ligand>
</feature>
<feature type="binding site" evidence="2">
    <location>
        <begin position="233"/>
        <end position="235"/>
    </location>
    <ligand>
        <name>NAD(+)</name>
        <dbReference type="ChEBI" id="CHEBI:57540"/>
    </ligand>
</feature>
<feature type="binding site" evidence="2">
    <location>
        <position position="259"/>
    </location>
    <ligand>
        <name>NAD(+)</name>
        <dbReference type="ChEBI" id="CHEBI:57540"/>
    </ligand>
</feature>
<feature type="strand" evidence="4">
    <location>
        <begin position="2"/>
        <end position="5"/>
    </location>
</feature>
<feature type="helix" evidence="4">
    <location>
        <begin position="10"/>
        <end position="19"/>
    </location>
</feature>
<feature type="strand" evidence="4">
    <location>
        <begin position="25"/>
        <end position="28"/>
    </location>
</feature>
<feature type="turn" evidence="4">
    <location>
        <begin position="35"/>
        <end position="37"/>
    </location>
</feature>
<feature type="helix" evidence="4">
    <location>
        <begin position="38"/>
        <end position="41"/>
    </location>
</feature>
<feature type="strand" evidence="4">
    <location>
        <begin position="45"/>
        <end position="49"/>
    </location>
</feature>
<feature type="helix" evidence="4">
    <location>
        <begin position="57"/>
        <end position="65"/>
    </location>
</feature>
<feature type="strand" evidence="4">
    <location>
        <begin position="70"/>
        <end position="76"/>
    </location>
</feature>
<feature type="helix" evidence="4">
    <location>
        <begin position="83"/>
        <end position="88"/>
    </location>
</feature>
<feature type="helix" evidence="4">
    <location>
        <begin position="101"/>
        <end position="117"/>
    </location>
</feature>
<feature type="helix" evidence="4">
    <location>
        <begin position="119"/>
        <end position="127"/>
    </location>
</feature>
<feature type="helix" evidence="4">
    <location>
        <begin position="141"/>
        <end position="143"/>
    </location>
</feature>
<feature type="strand" evidence="4">
    <location>
        <begin position="144"/>
        <end position="149"/>
    </location>
</feature>
<feature type="helix" evidence="4">
    <location>
        <begin position="153"/>
        <end position="166"/>
    </location>
</feature>
<feature type="strand" evidence="4">
    <location>
        <begin position="169"/>
        <end position="173"/>
    </location>
</feature>
<feature type="helix" evidence="4">
    <location>
        <begin position="179"/>
        <end position="182"/>
    </location>
</feature>
<feature type="turn" evidence="4">
    <location>
        <begin position="183"/>
        <end position="185"/>
    </location>
</feature>
<feature type="helix" evidence="4">
    <location>
        <begin position="192"/>
        <end position="198"/>
    </location>
</feature>
<feature type="strand" evidence="4">
    <location>
        <begin position="200"/>
        <end position="204"/>
    </location>
</feature>
<feature type="turn" evidence="4">
    <location>
        <begin position="210"/>
        <end position="214"/>
    </location>
</feature>
<feature type="strand" evidence="4">
    <location>
        <begin position="215"/>
        <end position="217"/>
    </location>
</feature>
<feature type="helix" evidence="4">
    <location>
        <begin position="218"/>
        <end position="223"/>
    </location>
</feature>
<feature type="strand" evidence="4">
    <location>
        <begin position="228"/>
        <end position="232"/>
    </location>
</feature>
<feature type="helix" evidence="4">
    <location>
        <begin position="236"/>
        <end position="238"/>
    </location>
</feature>
<feature type="helix" evidence="4">
    <location>
        <begin position="241"/>
        <end position="250"/>
    </location>
</feature>
<feature type="strand" evidence="4">
    <location>
        <begin position="251"/>
        <end position="259"/>
    </location>
</feature>
<feature type="helix" evidence="4">
    <location>
        <begin position="264"/>
        <end position="266"/>
    </location>
</feature>
<feature type="turn" evidence="4">
    <location>
        <begin position="267"/>
        <end position="269"/>
    </location>
</feature>
<feature type="helix" evidence="4">
    <location>
        <begin position="280"/>
        <end position="287"/>
    </location>
</feature>
<feature type="strand" evidence="4">
    <location>
        <begin position="291"/>
        <end position="293"/>
    </location>
</feature>
<feature type="helix" evidence="4">
    <location>
        <begin position="302"/>
        <end position="320"/>
    </location>
</feature>
<feature type="helix" evidence="4">
    <location>
        <begin position="326"/>
        <end position="328"/>
    </location>
</feature>
<organism>
    <name type="scientific">Dictyostelium discoideum</name>
    <name type="common">Social amoeba</name>
    <dbReference type="NCBI Taxonomy" id="44689"/>
    <lineage>
        <taxon>Eukaryota</taxon>
        <taxon>Amoebozoa</taxon>
        <taxon>Evosea</taxon>
        <taxon>Eumycetozoa</taxon>
        <taxon>Dictyostelia</taxon>
        <taxon>Dictyosteliales</taxon>
        <taxon>Dictyosteliaceae</taxon>
        <taxon>Dictyostelium</taxon>
    </lineage>
</organism>
<comment type="catalytic activity">
    <reaction>
        <text>(R)-lactate + NAD(+) = pyruvate + NADH + H(+)</text>
        <dbReference type="Rhea" id="RHEA:16369"/>
        <dbReference type="ChEBI" id="CHEBI:15361"/>
        <dbReference type="ChEBI" id="CHEBI:15378"/>
        <dbReference type="ChEBI" id="CHEBI:16004"/>
        <dbReference type="ChEBI" id="CHEBI:57540"/>
        <dbReference type="ChEBI" id="CHEBI:57945"/>
        <dbReference type="EC" id="1.1.1.28"/>
    </reaction>
</comment>
<comment type="similarity">
    <text evidence="3">Belongs to the D-isomer specific 2-hydroxyacid dehydrogenase family.</text>
</comment>
<reference key="1">
    <citation type="journal article" date="2005" name="Nature">
        <title>The genome of the social amoeba Dictyostelium discoideum.</title>
        <authorList>
            <person name="Eichinger L."/>
            <person name="Pachebat J.A."/>
            <person name="Gloeckner G."/>
            <person name="Rajandream M.A."/>
            <person name="Sucgang R."/>
            <person name="Berriman M."/>
            <person name="Song J."/>
            <person name="Olsen R."/>
            <person name="Szafranski K."/>
            <person name="Xu Q."/>
            <person name="Tunggal B."/>
            <person name="Kummerfeld S."/>
            <person name="Madera M."/>
            <person name="Konfortov B.A."/>
            <person name="Rivero F."/>
            <person name="Bankier A.T."/>
            <person name="Lehmann R."/>
            <person name="Hamlin N."/>
            <person name="Davies R."/>
            <person name="Gaudet P."/>
            <person name="Fey P."/>
            <person name="Pilcher K."/>
            <person name="Chen G."/>
            <person name="Saunders D."/>
            <person name="Sodergren E.J."/>
            <person name="Davis P."/>
            <person name="Kerhornou A."/>
            <person name="Nie X."/>
            <person name="Hall N."/>
            <person name="Anjard C."/>
            <person name="Hemphill L."/>
            <person name="Bason N."/>
            <person name="Farbrother P."/>
            <person name="Desany B."/>
            <person name="Just E."/>
            <person name="Morio T."/>
            <person name="Rost R."/>
            <person name="Churcher C.M."/>
            <person name="Cooper J."/>
            <person name="Haydock S."/>
            <person name="van Driessche N."/>
            <person name="Cronin A."/>
            <person name="Goodhead I."/>
            <person name="Muzny D.M."/>
            <person name="Mourier T."/>
            <person name="Pain A."/>
            <person name="Lu M."/>
            <person name="Harper D."/>
            <person name="Lindsay R."/>
            <person name="Hauser H."/>
            <person name="James K.D."/>
            <person name="Quiles M."/>
            <person name="Madan Babu M."/>
            <person name="Saito T."/>
            <person name="Buchrieser C."/>
            <person name="Wardroper A."/>
            <person name="Felder M."/>
            <person name="Thangavelu M."/>
            <person name="Johnson D."/>
            <person name="Knights A."/>
            <person name="Loulseged H."/>
            <person name="Mungall K.L."/>
            <person name="Oliver K."/>
            <person name="Price C."/>
            <person name="Quail M.A."/>
            <person name="Urushihara H."/>
            <person name="Hernandez J."/>
            <person name="Rabbinowitsch E."/>
            <person name="Steffen D."/>
            <person name="Sanders M."/>
            <person name="Ma J."/>
            <person name="Kohara Y."/>
            <person name="Sharp S."/>
            <person name="Simmonds M.N."/>
            <person name="Spiegler S."/>
            <person name="Tivey A."/>
            <person name="Sugano S."/>
            <person name="White B."/>
            <person name="Walker D."/>
            <person name="Woodward J.R."/>
            <person name="Winckler T."/>
            <person name="Tanaka Y."/>
            <person name="Shaulsky G."/>
            <person name="Schleicher M."/>
            <person name="Weinstock G.M."/>
            <person name="Rosenthal A."/>
            <person name="Cox E.C."/>
            <person name="Chisholm R.L."/>
            <person name="Gibbs R.A."/>
            <person name="Loomis W.F."/>
            <person name="Platzer M."/>
            <person name="Kay R.R."/>
            <person name="Williams J.G."/>
            <person name="Dear P.H."/>
            <person name="Noegel A.A."/>
            <person name="Barrell B.G."/>
            <person name="Kuspa A."/>
        </authorList>
    </citation>
    <scope>NUCLEOTIDE SEQUENCE [LARGE SCALE GENOMIC DNA]</scope>
    <source>
        <strain>AX4</strain>
    </source>
</reference>
<reference key="2">
    <citation type="journal article" date="2006" name="Mol. Cell. Proteomics">
        <title>Proteomics fingerprinting of phagosome maturation and evidence for the role of a Galpha during uptake.</title>
        <authorList>
            <person name="Gotthardt D."/>
            <person name="Blancheteau V."/>
            <person name="Bosserhoff A."/>
            <person name="Ruppert T."/>
            <person name="Delorenzi M."/>
            <person name="Soldati T."/>
        </authorList>
    </citation>
    <scope>IDENTIFICATION BY MASS SPECTROMETRY [LARGE SCALE ANALYSIS]</scope>
    <source>
        <strain>AX2</strain>
    </source>
</reference>
<gene>
    <name type="primary">ldhA</name>
    <name type="ORF">DDB_G0281101</name>
</gene>
<keyword id="KW-0002">3D-structure</keyword>
<keyword id="KW-0520">NAD</keyword>
<keyword id="KW-0560">Oxidoreductase</keyword>
<keyword id="KW-1185">Reference proteome</keyword>
<proteinExistence type="evidence at protein level"/>
<sequence length="340" mass="37907">MKITLFSSKPYWVKWFNELNKFSYEINYVTSACDIKSVNEAKGSEAVCCFVNDDLSKEVIETLHSNGTKVILMRCAGFNKVDLDTANKLGIPVLRVPAYSPNAVSEYALSLIMALNRKTHKAHDRVRDANFEINGMEGFNMVSKVYGIVGTGNIGEQLCRVLKLGFGAKVIAYDIIENKAVTDIGIEYVKTLDEIWKQCDVISLHTPLNSQTKYMVNSESIEKMRDGVMIINVSRGALVNASDAIVGLKSGKISSLGMDVYENETDYFYQDHNGSIIKDDNLSLLISYPNVMITSHQAWYTKEAISCICGTSLQNFVDFRSNQIKKSNLVNNPISSQPTQ</sequence>